<sequence length="299" mass="33048">MTKVGLRIDVDTLRGTREGVPRLLATLHRHGVQASFFFSVGPDNMGRHLWRLIKPRFLWKMLRSNAASLYGWDILLAGTAWPGKNIGNANAGIIRETATYHETGLHAWDHHAWQTHSGHWSIRQLEEDIARGITALEAIIGKPVTCSAAAGWRADGRVVRAKEPFNLRYNSDCRGTTLFRPLLMPGQTGTPQIPVTLPTWDEVIGPAVQAQSFNTWIISRMLQDKGTPVYTIHAEVEGIVHQPLFEDLLVRARDAGITFCPLGELLPASPESLPLGQIVRGHIPGREGWLGCQQAVSAS</sequence>
<evidence type="ECO:0000255" key="1">
    <source>
        <dbReference type="HAMAP-Rule" id="MF_01870"/>
    </source>
</evidence>
<protein>
    <recommendedName>
        <fullName evidence="1">Probable 4-deoxy-4-formamido-L-arabinose-phosphoundecaprenol deformylase ArnD</fullName>
        <ecNumber evidence="1">3.5.1.n3</ecNumber>
    </recommendedName>
</protein>
<keyword id="KW-0046">Antibiotic resistance</keyword>
<keyword id="KW-0378">Hydrolase</keyword>
<keyword id="KW-0441">Lipid A biosynthesis</keyword>
<keyword id="KW-0444">Lipid biosynthesis</keyword>
<keyword id="KW-0443">Lipid metabolism</keyword>
<keyword id="KW-0448">Lipopolysaccharide biosynthesis</keyword>
<feature type="chain" id="PRO_0000383535" description="Probable 4-deoxy-4-formamido-L-arabinose-phosphoundecaprenol deformylase ArnD">
    <location>
        <begin position="1"/>
        <end position="299"/>
    </location>
</feature>
<feature type="domain" description="NodB homology" evidence="1">
    <location>
        <begin position="2"/>
        <end position="260"/>
    </location>
</feature>
<gene>
    <name evidence="1" type="primary">arnD</name>
    <name type="ordered locus">SSPA0527</name>
</gene>
<proteinExistence type="inferred from homology"/>
<accession>B5BCP5</accession>
<dbReference type="EC" id="3.5.1.n3" evidence="1"/>
<dbReference type="EMBL" id="FM200053">
    <property type="protein sequence ID" value="CAR58656.1"/>
    <property type="molecule type" value="Genomic_DNA"/>
</dbReference>
<dbReference type="RefSeq" id="WP_000169759.1">
    <property type="nucleotide sequence ID" value="NC_011147.1"/>
</dbReference>
<dbReference type="SMR" id="B5BCP5"/>
<dbReference type="KEGG" id="sek:SSPA0527"/>
<dbReference type="HOGENOM" id="CLU_084199_0_0_6"/>
<dbReference type="UniPathway" id="UPA00030"/>
<dbReference type="UniPathway" id="UPA00036">
    <property type="reaction ID" value="UER00496"/>
</dbReference>
<dbReference type="Proteomes" id="UP000001869">
    <property type="component" value="Chromosome"/>
</dbReference>
<dbReference type="GO" id="GO:0016020">
    <property type="term" value="C:membrane"/>
    <property type="evidence" value="ECO:0007669"/>
    <property type="project" value="GOC"/>
</dbReference>
<dbReference type="GO" id="GO:0016811">
    <property type="term" value="F:hydrolase activity, acting on carbon-nitrogen (but not peptide) bonds, in linear amides"/>
    <property type="evidence" value="ECO:0007669"/>
    <property type="project" value="UniProtKB-UniRule"/>
</dbReference>
<dbReference type="GO" id="GO:0036108">
    <property type="term" value="P:4-amino-4-deoxy-alpha-L-arabinopyranosyl undecaprenyl phosphate biosynthetic process"/>
    <property type="evidence" value="ECO:0007669"/>
    <property type="project" value="UniProtKB-UniRule"/>
</dbReference>
<dbReference type="GO" id="GO:0009245">
    <property type="term" value="P:lipid A biosynthetic process"/>
    <property type="evidence" value="ECO:0007669"/>
    <property type="project" value="UniProtKB-UniRule"/>
</dbReference>
<dbReference type="GO" id="GO:0009103">
    <property type="term" value="P:lipopolysaccharide biosynthetic process"/>
    <property type="evidence" value="ECO:0007669"/>
    <property type="project" value="UniProtKB-UniRule"/>
</dbReference>
<dbReference type="GO" id="GO:0046677">
    <property type="term" value="P:response to antibiotic"/>
    <property type="evidence" value="ECO:0007669"/>
    <property type="project" value="UniProtKB-KW"/>
</dbReference>
<dbReference type="Gene3D" id="3.20.20.370">
    <property type="entry name" value="Glycoside hydrolase/deacetylase"/>
    <property type="match status" value="1"/>
</dbReference>
<dbReference type="HAMAP" id="MF_01870">
    <property type="entry name" value="ArnD"/>
    <property type="match status" value="1"/>
</dbReference>
<dbReference type="InterPro" id="IPR023557">
    <property type="entry name" value="ArnD"/>
</dbReference>
<dbReference type="InterPro" id="IPR011330">
    <property type="entry name" value="Glyco_hydro/deAcase_b/a-brl"/>
</dbReference>
<dbReference type="InterPro" id="IPR002509">
    <property type="entry name" value="NODB_dom"/>
</dbReference>
<dbReference type="InterPro" id="IPR050248">
    <property type="entry name" value="Polysacc_deacetylase_ArnD"/>
</dbReference>
<dbReference type="NCBIfam" id="NF011923">
    <property type="entry name" value="PRK15394.1"/>
    <property type="match status" value="1"/>
</dbReference>
<dbReference type="PANTHER" id="PTHR10587:SF137">
    <property type="entry name" value="4-DEOXY-4-FORMAMIDO-L-ARABINOSE-PHOSPHOUNDECAPRENOL DEFORMYLASE ARND-RELATED"/>
    <property type="match status" value="1"/>
</dbReference>
<dbReference type="PANTHER" id="PTHR10587">
    <property type="entry name" value="GLYCOSYL TRANSFERASE-RELATED"/>
    <property type="match status" value="1"/>
</dbReference>
<dbReference type="Pfam" id="PF01522">
    <property type="entry name" value="Polysacc_deac_1"/>
    <property type="match status" value="1"/>
</dbReference>
<dbReference type="SUPFAM" id="SSF88713">
    <property type="entry name" value="Glycoside hydrolase/deacetylase"/>
    <property type="match status" value="1"/>
</dbReference>
<dbReference type="PROSITE" id="PS51677">
    <property type="entry name" value="NODB"/>
    <property type="match status" value="1"/>
</dbReference>
<name>ARND_SALPK</name>
<reference key="1">
    <citation type="journal article" date="2009" name="BMC Genomics">
        <title>Pseudogene accumulation in the evolutionary histories of Salmonella enterica serovars Paratyphi A and Typhi.</title>
        <authorList>
            <person name="Holt K.E."/>
            <person name="Thomson N.R."/>
            <person name="Wain J."/>
            <person name="Langridge G.C."/>
            <person name="Hasan R."/>
            <person name="Bhutta Z.A."/>
            <person name="Quail M.A."/>
            <person name="Norbertczak H."/>
            <person name="Walker D."/>
            <person name="Simmonds M."/>
            <person name="White B."/>
            <person name="Bason N."/>
            <person name="Mungall K."/>
            <person name="Dougan G."/>
            <person name="Parkhill J."/>
        </authorList>
    </citation>
    <scope>NUCLEOTIDE SEQUENCE [LARGE SCALE GENOMIC DNA]</scope>
    <source>
        <strain>AKU_12601</strain>
    </source>
</reference>
<comment type="function">
    <text evidence="1">Catalyzes the deformylation of 4-deoxy-4-formamido-L-arabinose-phosphoundecaprenol to 4-amino-4-deoxy-L-arabinose-phosphoundecaprenol. The modified arabinose is attached to lipid A and is required for resistance to polymyxin and cationic antimicrobial peptides.</text>
</comment>
<comment type="catalytic activity">
    <reaction evidence="1">
        <text>4-deoxy-4-formamido-alpha-L-arabinopyranosyl di-trans,octa-cis-undecaprenyl phosphate + H2O = 4-amino-4-deoxy-alpha-L-arabinopyranosyl di-trans,octa-cis-undecaprenyl phosphate + formate</text>
        <dbReference type="Rhea" id="RHEA:27734"/>
        <dbReference type="ChEBI" id="CHEBI:15377"/>
        <dbReference type="ChEBI" id="CHEBI:15740"/>
        <dbReference type="ChEBI" id="CHEBI:58909"/>
        <dbReference type="ChEBI" id="CHEBI:60463"/>
        <dbReference type="EC" id="3.5.1.n3"/>
    </reaction>
</comment>
<comment type="pathway">
    <text evidence="1">Glycolipid biosynthesis; 4-amino-4-deoxy-alpha-L-arabinose undecaprenyl phosphate biosynthesis; 4-amino-4-deoxy-alpha-L-arabinose undecaprenyl phosphate from UDP-4-deoxy-4-formamido-beta-L-arabinose and undecaprenyl phosphate: step 2/2.</text>
</comment>
<comment type="pathway">
    <text evidence="1">Bacterial outer membrane biogenesis; lipopolysaccharide biosynthesis.</text>
</comment>
<comment type="similarity">
    <text evidence="1">Belongs to the polysaccharide deacetylase family. ArnD deformylase subfamily.</text>
</comment>
<organism>
    <name type="scientific">Salmonella paratyphi A (strain AKU_12601)</name>
    <dbReference type="NCBI Taxonomy" id="554290"/>
    <lineage>
        <taxon>Bacteria</taxon>
        <taxon>Pseudomonadati</taxon>
        <taxon>Pseudomonadota</taxon>
        <taxon>Gammaproteobacteria</taxon>
        <taxon>Enterobacterales</taxon>
        <taxon>Enterobacteriaceae</taxon>
        <taxon>Salmonella</taxon>
    </lineage>
</organism>